<comment type="function">
    <text evidence="3">Promotes tail assembly by creating a scaffold for the tail tube proteins. Tail assembly proteins E and E' would wrap the linear tape measure protein to create a tail assembly scaffold.</text>
</comment>
<comment type="alternative products">
    <event type="ribosomal frameshifting"/>
    <isoform>
        <id>O64312-1</id>
        <name>Tail assembly protein E'</name>
        <sequence type="displayed"/>
    </isoform>
    <isoform>
        <id>O64313-1</id>
        <name>Tail assembly protein E</name>
        <sequence type="external"/>
    </isoform>
</comment>
<comment type="miscellaneous">
    <molecule>Isoform Tail assembly protein E'</molecule>
    <text evidence="1">Produced by -1 ribosomal frameshift.</text>
</comment>
<comment type="similarity">
    <text evidence="3">Belongs to the mulikevirus tail assembly protein family.</text>
</comment>
<protein>
    <recommendedName>
        <fullName evidence="3">Tail assembly protein E'</fullName>
    </recommendedName>
    <alternativeName>
        <fullName evidence="2">Gene product E'</fullName>
        <shortName evidence="2">gpE'</shortName>
    </alternativeName>
    <alternativeName>
        <fullName evidence="3">Tail assembly chaperone</fullName>
        <shortName>TAC</shortName>
    </alternativeName>
</protein>
<accession>O64312</accession>
<feature type="chain" id="PRO_0000432951" description="Tail assembly protein E'">
    <location>
        <begin position="1"/>
        <end position="142"/>
    </location>
</feature>
<keyword id="KW-0426">Late protein</keyword>
<keyword id="KW-1185">Reference proteome</keyword>
<keyword id="KW-0688">Ribosomal frameshifting</keyword>
<keyword id="KW-1188">Viral release from host cell</keyword>
<keyword id="KW-1245">Viral tail assembly</keyword>
<sequence length="142" mass="15437">MNKENVITLDNPVKRGEQVIEQVTLMKPSAGTLRGVSLAAVANSEVDALIKVLPRMTAPMLTEQEVAALELPDLVALAGKVVGFLVAELGAVTFPKNLSVDDLMADVAVIFHWPPSELYPMSLTELITWREKALRRSGNTNE</sequence>
<proteinExistence type="inferred from homology"/>
<gene>
    <name evidence="2" type="primary">E'</name>
</gene>
<organismHost>
    <name type="scientific">Enterobacteriaceae</name>
    <dbReference type="NCBI Taxonomy" id="543"/>
</organismHost>
<evidence type="ECO:0000269" key="1">
    <source>
    </source>
</evidence>
<evidence type="ECO:0000303" key="2">
    <source>
    </source>
</evidence>
<evidence type="ECO:0000305" key="3"/>
<evidence type="ECO:0000312" key="4">
    <source>
        <dbReference type="Proteomes" id="UP000009092"/>
    </source>
</evidence>
<name>TAPFS_BPP2</name>
<organism>
    <name type="scientific">Escherichia phage P2</name>
    <name type="common">Bacteriophage P2</name>
    <dbReference type="NCBI Taxonomy" id="2905681"/>
    <lineage>
        <taxon>Viruses</taxon>
        <taxon>Duplodnaviria</taxon>
        <taxon>Heunggongvirae</taxon>
        <taxon>Uroviricota</taxon>
        <taxon>Caudoviricetes</taxon>
        <taxon>Peduoviridae</taxon>
        <taxon>Peduovirus</taxon>
        <taxon>Peduovirus P2</taxon>
    </lineage>
</organism>
<dbReference type="EMBL" id="AF063097">
    <property type="protein sequence ID" value="AAD03292.1"/>
    <property type="molecule type" value="Genomic_DNA"/>
</dbReference>
<dbReference type="RefSeq" id="NP_046780.1">
    <molecule id="O64312-1"/>
    <property type="nucleotide sequence ID" value="NC_001895.1"/>
</dbReference>
<dbReference type="SMR" id="O64312"/>
<dbReference type="KEGG" id="vg:77440815"/>
<dbReference type="Proteomes" id="UP000009092">
    <property type="component" value="Genome"/>
</dbReference>
<dbReference type="GO" id="GO:0098003">
    <property type="term" value="P:viral tail assembly"/>
    <property type="evidence" value="ECO:0007669"/>
    <property type="project" value="UniProtKB-KW"/>
</dbReference>
<dbReference type="GO" id="GO:0075523">
    <property type="term" value="P:viral translational frameshifting"/>
    <property type="evidence" value="ECO:0007669"/>
    <property type="project" value="UniProtKB-KW"/>
</dbReference>
<dbReference type="InterPro" id="IPR009493">
    <property type="entry name" value="P2_GpE"/>
</dbReference>
<dbReference type="InterPro" id="IPR019289">
    <property type="entry name" value="Phage_tail_E/E"/>
</dbReference>
<dbReference type="Pfam" id="PF06528">
    <property type="entry name" value="Phage_P2_GpE"/>
    <property type="match status" value="1"/>
</dbReference>
<dbReference type="Pfam" id="PF10109">
    <property type="entry name" value="Phage_TAC_7"/>
    <property type="match status" value="1"/>
</dbReference>
<reference evidence="4" key="1">
    <citation type="submission" date="1998-05" db="EMBL/GenBank/DDBJ databases">
        <title>The complete genome of bacteriophage P2.</title>
        <authorList>
            <person name="Christie G.E."/>
            <person name="Haggard-Ljungquist E."/>
            <person name="Calendar R."/>
        </authorList>
    </citation>
    <scope>NUCLEOTIDE SEQUENCE [LARGE SCALE GENOMIC DNA]</scope>
</reference>
<reference key="2">
    <citation type="journal article" date="2002" name="J. Bacteriol.">
        <title>Programmed translational frameshift in the bacteriophage P2 FETUD tail gene operon.</title>
        <authorList>
            <person name="Christie G.E."/>
            <person name="Temple L.M."/>
            <person name="Bartlett B.A."/>
            <person name="Goodwin T.S."/>
        </authorList>
    </citation>
    <scope>RIBOSOMAL FRAMESHIFT</scope>
    <scope>IDENTIFICATION</scope>
</reference>